<evidence type="ECO:0000255" key="1"/>
<evidence type="ECO:0000255" key="2">
    <source>
        <dbReference type="PROSITE-ProRule" id="PRU00129"/>
    </source>
</evidence>
<evidence type="ECO:0000269" key="3">
    <source>
    </source>
</evidence>
<evidence type="ECO:0000269" key="4">
    <source>
    </source>
</evidence>
<evidence type="ECO:0000305" key="5"/>
<accession>D5K228</accession>
<accession>Q9M2I1</accession>
<gene>
    <name type="primary">RTM3</name>
    <name type="ordered locus">At3g58350</name>
    <name type="ORF">F9D24.260</name>
</gene>
<reference key="1">
    <citation type="journal article" date="2010" name="Philos. Trans. R. Soc. Lond., B, Biol. Sci.">
        <title>Adaptation of tobacco etch potyvirus to a susceptible ecotype of Arabidopsis thaliana capacitates it for systemic infection of resistant ecotypes.</title>
        <authorList>
            <person name="Lalic J."/>
            <person name="Agudelo-Romero P."/>
            <person name="Carrasco P."/>
            <person name="Elena S.F."/>
        </authorList>
    </citation>
    <scope>NUCLEOTIDE SEQUENCE [GENOMIC DNA]</scope>
    <scope>FUNCTION</scope>
    <source>
        <strain>cv. Wassilewskija</strain>
        <strain>cv. Wt-5</strain>
    </source>
</reference>
<reference key="2">
    <citation type="journal article" date="2012" name="PLoS ONE">
        <title>The RTM resistance to potyviruses in Arabidopsis thaliana: natural variation of the RTM genes and evidence for the implication of additional genes.</title>
        <authorList>
            <person name="Cosson P."/>
            <person name="Schurdi-Levraud V."/>
            <person name="Le Q.H."/>
            <person name="Sicard O."/>
            <person name="Caballero M."/>
            <person name="Roux F."/>
            <person name="Le Gall O."/>
            <person name="Candresse T."/>
            <person name="Revers F."/>
        </authorList>
    </citation>
    <scope>NUCLEOTIDE SEQUENCE [GENOMIC DNA]</scope>
    <source>
        <strain>cv. Ita-0</strain>
        <strain>cv. Jea</strain>
        <strain>cv. Kn-0</strain>
        <strain>cv. Ler-2</strain>
        <strain>cv. N13 Konchezero</strain>
        <strain>cv. Stw-0</strain>
        <strain>cv. Wassilewskija-2</strain>
    </source>
</reference>
<reference key="3">
    <citation type="journal article" date="2000" name="Nature">
        <title>Sequence and analysis of chromosome 3 of the plant Arabidopsis thaliana.</title>
        <authorList>
            <person name="Salanoubat M."/>
            <person name="Lemcke K."/>
            <person name="Rieger M."/>
            <person name="Ansorge W."/>
            <person name="Unseld M."/>
            <person name="Fartmann B."/>
            <person name="Valle G."/>
            <person name="Bloecker H."/>
            <person name="Perez-Alonso M."/>
            <person name="Obermaier B."/>
            <person name="Delseny M."/>
            <person name="Boutry M."/>
            <person name="Grivell L.A."/>
            <person name="Mache R."/>
            <person name="Puigdomenech P."/>
            <person name="De Simone V."/>
            <person name="Choisne N."/>
            <person name="Artiguenave F."/>
            <person name="Robert C."/>
            <person name="Brottier P."/>
            <person name="Wincker P."/>
            <person name="Cattolico L."/>
            <person name="Weissenbach J."/>
            <person name="Saurin W."/>
            <person name="Quetier F."/>
            <person name="Schaefer M."/>
            <person name="Mueller-Auer S."/>
            <person name="Gabel C."/>
            <person name="Fuchs M."/>
            <person name="Benes V."/>
            <person name="Wurmbach E."/>
            <person name="Drzonek H."/>
            <person name="Erfle H."/>
            <person name="Jordan N."/>
            <person name="Bangert S."/>
            <person name="Wiedelmann R."/>
            <person name="Kranz H."/>
            <person name="Voss H."/>
            <person name="Holland R."/>
            <person name="Brandt P."/>
            <person name="Nyakatura G."/>
            <person name="Vezzi A."/>
            <person name="D'Angelo M."/>
            <person name="Pallavicini A."/>
            <person name="Toppo S."/>
            <person name="Simionati B."/>
            <person name="Conrad A."/>
            <person name="Hornischer K."/>
            <person name="Kauer G."/>
            <person name="Loehnert T.-H."/>
            <person name="Nordsiek G."/>
            <person name="Reichelt J."/>
            <person name="Scharfe M."/>
            <person name="Schoen O."/>
            <person name="Bargues M."/>
            <person name="Terol J."/>
            <person name="Climent J."/>
            <person name="Navarro P."/>
            <person name="Collado C."/>
            <person name="Perez-Perez A."/>
            <person name="Ottenwaelder B."/>
            <person name="Duchemin D."/>
            <person name="Cooke R."/>
            <person name="Laudie M."/>
            <person name="Berger-Llauro C."/>
            <person name="Purnelle B."/>
            <person name="Masuy D."/>
            <person name="de Haan M."/>
            <person name="Maarse A.C."/>
            <person name="Alcaraz J.-P."/>
            <person name="Cottet A."/>
            <person name="Casacuberta E."/>
            <person name="Monfort A."/>
            <person name="Argiriou A."/>
            <person name="Flores M."/>
            <person name="Liguori R."/>
            <person name="Vitale D."/>
            <person name="Mannhaupt G."/>
            <person name="Haase D."/>
            <person name="Schoof H."/>
            <person name="Rudd S."/>
            <person name="Zaccaria P."/>
            <person name="Mewes H.-W."/>
            <person name="Mayer K.F.X."/>
            <person name="Kaul S."/>
            <person name="Town C.D."/>
            <person name="Koo H.L."/>
            <person name="Tallon L.J."/>
            <person name="Jenkins J."/>
            <person name="Rooney T."/>
            <person name="Rizzo M."/>
            <person name="Walts A."/>
            <person name="Utterback T."/>
            <person name="Fujii C.Y."/>
            <person name="Shea T.P."/>
            <person name="Creasy T.H."/>
            <person name="Haas B."/>
            <person name="Maiti R."/>
            <person name="Wu D."/>
            <person name="Peterson J."/>
            <person name="Van Aken S."/>
            <person name="Pai G."/>
            <person name="Militscher J."/>
            <person name="Sellers P."/>
            <person name="Gill J.E."/>
            <person name="Feldblyum T.V."/>
            <person name="Preuss D."/>
            <person name="Lin X."/>
            <person name="Nierman W.C."/>
            <person name="Salzberg S.L."/>
            <person name="White O."/>
            <person name="Venter J.C."/>
            <person name="Fraser C.M."/>
            <person name="Kaneko T."/>
            <person name="Nakamura Y."/>
            <person name="Sato S."/>
            <person name="Kato T."/>
            <person name="Asamizu E."/>
            <person name="Sasamoto S."/>
            <person name="Kimura T."/>
            <person name="Idesawa K."/>
            <person name="Kawashima K."/>
            <person name="Kishida Y."/>
            <person name="Kiyokawa C."/>
            <person name="Kohara M."/>
            <person name="Matsumoto M."/>
            <person name="Matsuno A."/>
            <person name="Muraki A."/>
            <person name="Nakayama S."/>
            <person name="Nakazaki N."/>
            <person name="Shinpo S."/>
            <person name="Takeuchi C."/>
            <person name="Wada T."/>
            <person name="Watanabe A."/>
            <person name="Yamada M."/>
            <person name="Yasuda M."/>
            <person name="Tabata S."/>
        </authorList>
    </citation>
    <scope>NUCLEOTIDE SEQUENCE [LARGE SCALE GENOMIC DNA]</scope>
    <source>
        <strain>cv. Columbia</strain>
    </source>
</reference>
<reference key="4">
    <citation type="journal article" date="2017" name="Plant J.">
        <title>Araport11: a complete reannotation of the Arabidopsis thaliana reference genome.</title>
        <authorList>
            <person name="Cheng C.Y."/>
            <person name="Krishnakumar V."/>
            <person name="Chan A.P."/>
            <person name="Thibaud-Nissen F."/>
            <person name="Schobel S."/>
            <person name="Town C.D."/>
        </authorList>
    </citation>
    <scope>GENOME REANNOTATION</scope>
    <source>
        <strain>cv. Columbia</strain>
    </source>
</reference>
<reference key="5">
    <citation type="journal article" date="2007" name="Adv. Exp. Med. Biol.">
        <title>Phylogeny of the TRAF/MATH domain.</title>
        <authorList>
            <person name="Zapata J.M."/>
            <person name="Martinez-Garcia V."/>
            <person name="Lefebvre S."/>
        </authorList>
    </citation>
    <scope>GENE FAMILY</scope>
    <scope>NOMENCLATURE</scope>
</reference>
<reference key="6">
    <citation type="journal article" date="2010" name="Plant Physiol.">
        <title>RTM3, which controls long-distance movement of potyviruses, is a member of a new plant gene family encoding a meprin and TRAF homology domain-containing protein.</title>
        <authorList>
            <person name="Cosson P."/>
            <person name="Sofer L."/>
            <person name="Le Q.H."/>
            <person name="Leger V."/>
            <person name="Schurdi-Levraud V."/>
            <person name="Whitham S.A."/>
            <person name="Yamamoto M.L."/>
            <person name="Gopalan S."/>
            <person name="Le Gall O."/>
            <person name="Candresse T."/>
            <person name="Carrington J.C."/>
            <person name="Revers F."/>
        </authorList>
    </citation>
    <scope>GENE FAMILY</scope>
    <scope>FUNCTION</scope>
    <scope>DISRUPTION PHENOTYPE</scope>
    <scope>MUTAGENESIS OF GLU-284</scope>
    <scope>INTERACTION WITH RTM1</scope>
    <scope>SUBUNIT</scope>
</reference>
<reference key="7">
    <citation type="journal article" date="2010" name="Plant Signal. Behav.">
        <title>A member of a new plant gene family encoding a meprin and TRAF homology (MATH) domain-containing protein is involved in restriction of long distance movement of plant viruses.</title>
        <authorList>
            <person name="Cosson P."/>
            <person name="Sofer L."/>
            <person name="Schurdi-Levraud V."/>
            <person name="Revers F."/>
        </authorList>
    </citation>
    <scope>REVIEW</scope>
</reference>
<protein>
    <recommendedName>
        <fullName>Protein RESTRICTED TEV MOVEMENT 3</fullName>
        <shortName>Protein RTM3</shortName>
    </recommendedName>
    <alternativeName>
        <fullName>MATH domain and coiled-coil domain-containing protein RTM3</fullName>
    </alternativeName>
    <alternativeName>
        <fullName>Restricted tobacco etch virus movement protein 3</fullName>
    </alternativeName>
</protein>
<sequence>MGKQFDKKITWTIKNFASLLSDLIYSDHFVVGGCKWHLRAYPKGYNNANSLSLFLGVAVPTSLPSGWRRHTKFRLTLVNQLSDKLSQSKLNELEQWFDEKTTNWGLSSMCPLNEIHAKDSGFLLNGELKIVVEIKVLETIGKLDVTEETSTITETVDVNGFQLLPSQAKSVSRMFAKHPELASDLRPKNPNLRTGYMSLLLSLIETLSQLPQQMSKDDLLDAYDALGSMRDAGFKLDWLEKKLYEVSEKKENEEASETGLQEMEEELKDMKQKCLEMEALVEKEKAKVSTAKAPISFDDIV</sequence>
<keyword id="KW-0175">Coiled coil</keyword>
<keyword id="KW-0611">Plant defense</keyword>
<keyword id="KW-1185">Reference proteome</keyword>
<organism>
    <name type="scientific">Arabidopsis thaliana</name>
    <name type="common">Mouse-ear cress</name>
    <dbReference type="NCBI Taxonomy" id="3702"/>
    <lineage>
        <taxon>Eukaryota</taxon>
        <taxon>Viridiplantae</taxon>
        <taxon>Streptophyta</taxon>
        <taxon>Embryophyta</taxon>
        <taxon>Tracheophyta</taxon>
        <taxon>Spermatophyta</taxon>
        <taxon>Magnoliopsida</taxon>
        <taxon>eudicotyledons</taxon>
        <taxon>Gunneridae</taxon>
        <taxon>Pentapetalae</taxon>
        <taxon>rosids</taxon>
        <taxon>malvids</taxon>
        <taxon>Brassicales</taxon>
        <taxon>Brassicaceae</taxon>
        <taxon>Camelineae</taxon>
        <taxon>Arabidopsis</taxon>
    </lineage>
</organism>
<proteinExistence type="evidence at protein level"/>
<feature type="chain" id="PRO_0000429301" description="Protein RESTRICTED TEV MOVEMENT 3">
    <location>
        <begin position="1"/>
        <end position="301"/>
    </location>
</feature>
<feature type="domain" description="MATH" evidence="2">
    <location>
        <begin position="6"/>
        <end position="134"/>
    </location>
</feature>
<feature type="coiled-coil region" evidence="1">
    <location>
        <begin position="235"/>
        <end position="289"/>
    </location>
</feature>
<feature type="mutagenesis site" description="In rtm3-1; susceptible to systemic infection by viruses." evidence="4">
    <original>E</original>
    <variation>K</variation>
    <location>
        <position position="284"/>
    </location>
</feature>
<comment type="function">
    <text evidence="3 4">Required for the restriction of long-distance movement of the pathogenic tobacco etch virus (TEV) without causing a hypersensitive response or inducing systemic acquired resistance.</text>
</comment>
<comment type="subunit">
    <text evidence="4">Self-interacts. Interacts with RTM1.</text>
</comment>
<comment type="disruption phenotype">
    <text evidence="4">Susceptible to systemic infection by tobacco etch virus (TEV) and to some isolates of lettuce mosaic virus (LMV) and plum pox virus (PPV).</text>
</comment>
<comment type="sequence caution" evidence="5">
    <conflict type="erroneous gene model prediction">
        <sequence resource="EMBL-CDS" id="CAB68173"/>
    </conflict>
</comment>
<dbReference type="EMBL" id="GU396210">
    <property type="protein sequence ID" value="ADE43100.1"/>
    <property type="molecule type" value="Genomic_DNA"/>
</dbReference>
<dbReference type="EMBL" id="GU396220">
    <property type="protein sequence ID" value="ADE43110.1"/>
    <property type="molecule type" value="Genomic_DNA"/>
</dbReference>
<dbReference type="EMBL" id="FR681938">
    <property type="protein sequence ID" value="CBW45910.1"/>
    <property type="molecule type" value="Genomic_DNA"/>
</dbReference>
<dbReference type="EMBL" id="FR681941">
    <property type="protein sequence ID" value="CBW45913.1"/>
    <property type="molecule type" value="Genomic_DNA"/>
</dbReference>
<dbReference type="EMBL" id="FR681944">
    <property type="protein sequence ID" value="CBW45916.1"/>
    <property type="molecule type" value="Genomic_DNA"/>
</dbReference>
<dbReference type="EMBL" id="FR681947">
    <property type="protein sequence ID" value="CBW45919.1"/>
    <property type="molecule type" value="Genomic_DNA"/>
</dbReference>
<dbReference type="EMBL" id="FR681960">
    <property type="protein sequence ID" value="CBW45932.1"/>
    <property type="molecule type" value="Genomic_DNA"/>
</dbReference>
<dbReference type="EMBL" id="FR681961">
    <property type="protein sequence ID" value="CBW45933.1"/>
    <property type="molecule type" value="Genomic_DNA"/>
</dbReference>
<dbReference type="EMBL" id="FR681962">
    <property type="protein sequence ID" value="CBW45934.1"/>
    <property type="molecule type" value="Genomic_DNA"/>
</dbReference>
<dbReference type="EMBL" id="AL137081">
    <property type="protein sequence ID" value="CAB68173.1"/>
    <property type="status" value="ALT_SEQ"/>
    <property type="molecule type" value="Genomic_DNA"/>
</dbReference>
<dbReference type="EMBL" id="CP002686">
    <property type="protein sequence ID" value="AEE79772.1"/>
    <property type="molecule type" value="Genomic_DNA"/>
</dbReference>
<dbReference type="EMBL" id="CP002686">
    <property type="protein sequence ID" value="ANM65779.1"/>
    <property type="molecule type" value="Genomic_DNA"/>
</dbReference>
<dbReference type="PIR" id="T45995">
    <property type="entry name" value="T45995"/>
</dbReference>
<dbReference type="RefSeq" id="NP_001319792.1">
    <property type="nucleotide sequence ID" value="NM_001339919.1"/>
</dbReference>
<dbReference type="RefSeq" id="NP_567063.1">
    <property type="nucleotide sequence ID" value="NM_115697.1"/>
</dbReference>
<dbReference type="SMR" id="D5K228"/>
<dbReference type="BioGRID" id="10319">
    <property type="interactions" value="2"/>
</dbReference>
<dbReference type="FunCoup" id="D5K228">
    <property type="interactions" value="43"/>
</dbReference>
<dbReference type="IntAct" id="D5K228">
    <property type="interactions" value="1"/>
</dbReference>
<dbReference type="STRING" id="3702.D5K228"/>
<dbReference type="PaxDb" id="3702-AT3G58350.1"/>
<dbReference type="ProteomicsDB" id="226697"/>
<dbReference type="EnsemblPlants" id="AT3G58350.1">
    <property type="protein sequence ID" value="AT3G58350.1"/>
    <property type="gene ID" value="AT3G58350"/>
</dbReference>
<dbReference type="EnsemblPlants" id="AT3G58350.2">
    <property type="protein sequence ID" value="AT3G58350.2"/>
    <property type="gene ID" value="AT3G58350"/>
</dbReference>
<dbReference type="GeneID" id="825004"/>
<dbReference type="Gramene" id="AT3G58350.1">
    <property type="protein sequence ID" value="AT3G58350.1"/>
    <property type="gene ID" value="AT3G58350"/>
</dbReference>
<dbReference type="Gramene" id="AT3G58350.2">
    <property type="protein sequence ID" value="AT3G58350.2"/>
    <property type="gene ID" value="AT3G58350"/>
</dbReference>
<dbReference type="KEGG" id="ath:AT3G58350"/>
<dbReference type="Araport" id="AT3G58350"/>
<dbReference type="TAIR" id="AT3G58350">
    <property type="gene designation" value="RTM3"/>
</dbReference>
<dbReference type="eggNOG" id="KOG1987">
    <property type="taxonomic scope" value="Eukaryota"/>
</dbReference>
<dbReference type="HOGENOM" id="CLU_026537_0_0_1"/>
<dbReference type="InParanoid" id="D5K228"/>
<dbReference type="OMA" id="CPLNEIH"/>
<dbReference type="PRO" id="PR:D5K228"/>
<dbReference type="Proteomes" id="UP000006548">
    <property type="component" value="Chromosome 3"/>
</dbReference>
<dbReference type="ExpressionAtlas" id="D5K228">
    <property type="expression patterns" value="baseline and differential"/>
</dbReference>
<dbReference type="GO" id="GO:0051607">
    <property type="term" value="P:defense response to virus"/>
    <property type="evidence" value="ECO:0000315"/>
    <property type="project" value="UniProtKB"/>
</dbReference>
<dbReference type="GO" id="GO:0009615">
    <property type="term" value="P:response to virus"/>
    <property type="evidence" value="ECO:0000315"/>
    <property type="project" value="TAIR"/>
</dbReference>
<dbReference type="CDD" id="cd00121">
    <property type="entry name" value="MATH"/>
    <property type="match status" value="1"/>
</dbReference>
<dbReference type="Gene3D" id="2.60.210.10">
    <property type="entry name" value="Apoptosis, Tumor Necrosis Factor Receptor Associated Protein 2, Chain A"/>
    <property type="match status" value="1"/>
</dbReference>
<dbReference type="InterPro" id="IPR050804">
    <property type="entry name" value="MATH-CC_domain_protein"/>
</dbReference>
<dbReference type="InterPro" id="IPR002083">
    <property type="entry name" value="MATH/TRAF_dom"/>
</dbReference>
<dbReference type="InterPro" id="IPR008974">
    <property type="entry name" value="TRAF-like"/>
</dbReference>
<dbReference type="PANTHER" id="PTHR46236:SF7">
    <property type="entry name" value="PROTEIN RESTRICTED TEV MOVEMENT 3"/>
    <property type="match status" value="1"/>
</dbReference>
<dbReference type="PANTHER" id="PTHR46236">
    <property type="entry name" value="TRAF-LIKE SUPERFAMILY PROTEIN"/>
    <property type="match status" value="1"/>
</dbReference>
<dbReference type="Pfam" id="PF22486">
    <property type="entry name" value="MATH_2"/>
    <property type="match status" value="1"/>
</dbReference>
<dbReference type="SMART" id="SM00061">
    <property type="entry name" value="MATH"/>
    <property type="match status" value="1"/>
</dbReference>
<dbReference type="SUPFAM" id="SSF49599">
    <property type="entry name" value="TRAF domain-like"/>
    <property type="match status" value="1"/>
</dbReference>
<dbReference type="PROSITE" id="PS50144">
    <property type="entry name" value="MATH"/>
    <property type="match status" value="1"/>
</dbReference>
<name>RTM3_ARATH</name>